<evidence type="ECO:0000269" key="1">
    <source>
    </source>
</evidence>
<evidence type="ECO:0000269" key="2">
    <source>
    </source>
</evidence>
<evidence type="ECO:0000269" key="3">
    <source>
    </source>
</evidence>
<evidence type="ECO:0000303" key="4">
    <source>
    </source>
</evidence>
<evidence type="ECO:0000303" key="5">
    <source>
    </source>
</evidence>
<evidence type="ECO:0000305" key="6"/>
<evidence type="ECO:0000305" key="7">
    <source>
    </source>
</evidence>
<evidence type="ECO:0000305" key="8">
    <source>
    </source>
</evidence>
<evidence type="ECO:0000312" key="9">
    <source>
        <dbReference type="Proteomes" id="UP000001940"/>
    </source>
</evidence>
<evidence type="ECO:0000312" key="10">
    <source>
        <dbReference type="WormBase" id="Y74C9A.2a"/>
    </source>
</evidence>
<evidence type="ECO:0000312" key="11">
    <source>
        <dbReference type="WormBase" id="Y74C9A.2b"/>
    </source>
</evidence>
<gene>
    <name evidence="10" type="primary">nlp-40</name>
    <name evidence="10" type="ORF">Y74C9A.2</name>
</gene>
<keyword id="KW-0025">Alternative splicing</keyword>
<keyword id="KW-0165">Cleavage on pair of basic residues</keyword>
<keyword id="KW-0968">Cytoplasmic vesicle</keyword>
<keyword id="KW-0903">Direct protein sequencing</keyword>
<keyword id="KW-0527">Neuropeptide</keyword>
<keyword id="KW-1185">Reference proteome</keyword>
<keyword id="KW-0964">Secreted</keyword>
<keyword id="KW-0732">Signal</keyword>
<dbReference type="EMBL" id="BX284601">
    <property type="protein sequence ID" value="CCD68262.1"/>
    <property type="molecule type" value="Genomic_DNA"/>
</dbReference>
<dbReference type="EMBL" id="BX284601">
    <property type="protein sequence ID" value="CDK13438.1"/>
    <property type="molecule type" value="Genomic_DNA"/>
</dbReference>
<dbReference type="RefSeq" id="NP_001293206.1">
    <molecule id="Q9N4D8-2"/>
    <property type="nucleotide sequence ID" value="NM_001306277.3"/>
</dbReference>
<dbReference type="RefSeq" id="NP_490661.1">
    <molecule id="Q9N4D8-1"/>
    <property type="nucleotide sequence ID" value="NM_058259.5"/>
</dbReference>
<dbReference type="SMR" id="Q9N4D8"/>
<dbReference type="FunCoup" id="Q9N4D8">
    <property type="interactions" value="341"/>
</dbReference>
<dbReference type="STRING" id="6239.Y74C9A.2a.1"/>
<dbReference type="PaxDb" id="6239-Y74C9A.2.4"/>
<dbReference type="PeptideAtlas" id="Q9N4D8"/>
<dbReference type="EnsemblMetazoa" id="Y74C9A.2a.1">
    <molecule id="Q9N4D8-1"/>
    <property type="protein sequence ID" value="Y74C9A.2a.1"/>
    <property type="gene ID" value="WBGene00022276"/>
</dbReference>
<dbReference type="EnsemblMetazoa" id="Y74C9A.2a.2">
    <molecule id="Q9N4D8-1"/>
    <property type="protein sequence ID" value="Y74C9A.2a.2"/>
    <property type="gene ID" value="WBGene00022276"/>
</dbReference>
<dbReference type="EnsemblMetazoa" id="Y74C9A.2a.3">
    <molecule id="Q9N4D8-1"/>
    <property type="protein sequence ID" value="Y74C9A.2a.3"/>
    <property type="gene ID" value="WBGene00022276"/>
</dbReference>
<dbReference type="EnsemblMetazoa" id="Y74C9A.2b.1">
    <molecule id="Q9N4D8-2"/>
    <property type="protein sequence ID" value="Y74C9A.2b.1"/>
    <property type="gene ID" value="WBGene00022276"/>
</dbReference>
<dbReference type="GeneID" id="171591"/>
<dbReference type="KEGG" id="cel:CELE_Y74C9A.2"/>
<dbReference type="UCSC" id="Y74C9A.2.2">
    <molecule id="Q9N4D8-1"/>
    <property type="organism name" value="c. elegans"/>
</dbReference>
<dbReference type="AGR" id="WB:WBGene00022276"/>
<dbReference type="CTD" id="171591"/>
<dbReference type="WormBase" id="Y74C9A.2a">
    <molecule id="Q9N4D8-1"/>
    <property type="protein sequence ID" value="CE24660"/>
    <property type="gene ID" value="WBGene00022276"/>
    <property type="gene designation" value="nlp-40"/>
</dbReference>
<dbReference type="WormBase" id="Y74C9A.2b">
    <molecule id="Q9N4D8-2"/>
    <property type="protein sequence ID" value="CE49228"/>
    <property type="gene ID" value="WBGene00022276"/>
    <property type="gene designation" value="nlp-40"/>
</dbReference>
<dbReference type="eggNOG" id="ENOG502T1KT">
    <property type="taxonomic scope" value="Eukaryota"/>
</dbReference>
<dbReference type="HOGENOM" id="CLU_2087024_0_0_1"/>
<dbReference type="InParanoid" id="Q9N4D8"/>
<dbReference type="OMA" id="LAWQPMK"/>
<dbReference type="OrthoDB" id="5864411at2759"/>
<dbReference type="PRO" id="PR:Q9N4D8"/>
<dbReference type="Proteomes" id="UP000001940">
    <property type="component" value="Chromosome I"/>
</dbReference>
<dbReference type="Bgee" id="WBGene00022276">
    <property type="expression patterns" value="Expressed in larva and 4 other cell types or tissues"/>
</dbReference>
<dbReference type="GO" id="GO:0031410">
    <property type="term" value="C:cytoplasmic vesicle"/>
    <property type="evidence" value="ECO:0007669"/>
    <property type="project" value="UniProtKB-KW"/>
</dbReference>
<dbReference type="GO" id="GO:0005615">
    <property type="term" value="C:extracellular space"/>
    <property type="evidence" value="ECO:0000314"/>
    <property type="project" value="WormBase"/>
</dbReference>
<dbReference type="GO" id="GO:0071855">
    <property type="term" value="F:neuropeptide receptor binding"/>
    <property type="evidence" value="ECO:0000305"/>
    <property type="project" value="WormBase"/>
</dbReference>
<dbReference type="GO" id="GO:0007218">
    <property type="term" value="P:neuropeptide signaling pathway"/>
    <property type="evidence" value="ECO:0000314"/>
    <property type="project" value="WormBase"/>
</dbReference>
<dbReference type="GO" id="GO:2000294">
    <property type="term" value="P:positive regulation of defecation"/>
    <property type="evidence" value="ECO:0000315"/>
    <property type="project" value="WormBase"/>
</dbReference>
<reference evidence="9" key="1">
    <citation type="journal article" date="1998" name="Science">
        <title>Genome sequence of the nematode C. elegans: a platform for investigating biology.</title>
        <authorList>
            <consortium name="The C. elegans sequencing consortium"/>
        </authorList>
    </citation>
    <scope>NUCLEOTIDE SEQUENCE [LARGE SCALE GENOMIC DNA]</scope>
    <source>
        <strain evidence="9">Bristol N2</strain>
    </source>
</reference>
<reference evidence="6" key="2">
    <citation type="journal article" date="2005" name="Biochem. Biophys. Res. Commun.">
        <title>Discovering neuropeptides in Caenorhabditis elegans by two dimensional liquid chromatography and mass spectrometry.</title>
        <authorList>
            <person name="Husson S.J."/>
            <person name="Clynen E."/>
            <person name="Baggerman G."/>
            <person name="De Loof A."/>
            <person name="Schoofs L."/>
        </authorList>
    </citation>
    <scope>PROTEIN SEQUENCE OF 18-29</scope>
    <scope>IDENTIFICATION BY MASS SPECTROMETRY</scope>
</reference>
<reference evidence="6" key="3">
    <citation type="journal article" date="2006" name="J. Neurochem.">
        <title>Defective processing of neuropeptide precursors in Caenorhabditis elegans lacking proprotein convertase 2 (KPC-2/EGL-3): mutant analysis by mass spectrometry.</title>
        <authorList>
            <person name="Husson S.J."/>
            <person name="Clynen E."/>
            <person name="Baggerman G."/>
            <person name="Janssen T."/>
            <person name="Schoofs L."/>
        </authorList>
    </citation>
    <scope>PROTEIN SEQUENCE OF 52-65</scope>
    <scope>IDENTIFICATION BY MASS SPECTROMETRY</scope>
</reference>
<reference evidence="6" key="4">
    <citation type="journal article" date="2007" name="J. Neurochem.">
        <title>Impaired processing of FLP and NLP peptides in carboxypeptidase E (EGL-21)-deficient Caenorhabditis elegans as analyzed by mass spectrometry.</title>
        <authorList>
            <person name="Husson S.J."/>
            <person name="Janssen T."/>
            <person name="Baggerman G."/>
            <person name="Bogert B."/>
            <person name="Kahn-Kirby A.H."/>
            <person name="Ashrafi K."/>
            <person name="Schoofs L."/>
        </authorList>
    </citation>
    <scope>PROTEIN SEQUENCE OF 18-29 AND 68-74</scope>
    <scope>IDENTIFICATION BY MASS SPECTROMETRY</scope>
</reference>
<reference evidence="6" key="5">
    <citation type="journal article" date="2013" name="Curr. Biol.">
        <title>Neuropeptide secreted from a pacemaker activates neurons to control a rhythmic behavior.</title>
        <authorList>
            <person name="Wang H."/>
            <person name="Girskis K."/>
            <person name="Janssen T."/>
            <person name="Chan J.P."/>
            <person name="Dasgupta K."/>
            <person name="Knowles J.A."/>
            <person name="Schoofs L."/>
            <person name="Sieburth D."/>
        </authorList>
    </citation>
    <scope>SYNTHESIS OF P1; P2; P3 AND P4</scope>
    <scope>FUNCTION</scope>
    <scope>SUBCELLULAR LOCATION</scope>
    <scope>TISSUE SPECIFICITY</scope>
    <scope>DISRUPTION PHENOTYPE</scope>
</reference>
<proteinExistence type="evidence at protein level"/>
<accession>Q9N4D8</accession>
<accession>V6CJ31</accession>
<sequence>MKLVILLSFVATVAVFAAPSAPAGLEEKLRALQEQLYSLEKENGVDVKQKEQPAAADTFLGFVPQKRMVAWQPMKRSMINEDSRAPLLHAIEARLAEVLRAGERLGVNPEEVLADLRARNQFQ</sequence>
<feature type="signal peptide" evidence="1 2">
    <location>
        <begin position="1"/>
        <end position="17"/>
    </location>
</feature>
<feature type="peptide" id="PRO_0000438284" description="Peptide P1" evidence="1 2">
    <location>
        <begin position="18"/>
        <end position="29"/>
    </location>
</feature>
<feature type="propeptide" id="PRO_0000438285" evidence="1">
    <location>
        <begin position="30"/>
        <end position="31"/>
    </location>
</feature>
<feature type="peptide" id="PRO_0000438286" description="Peptide P2" evidence="7">
    <location>
        <begin position="32"/>
        <end position="65"/>
    </location>
</feature>
<feature type="propeptide" id="PRO_0000438287" evidence="1">
    <location>
        <begin position="66"/>
        <end position="67"/>
    </location>
</feature>
<feature type="peptide" id="PRO_0000438288" description="Peptide P3" evidence="2">
    <location>
        <begin position="68"/>
        <end position="74"/>
    </location>
</feature>
<feature type="propeptide" id="PRO_0000438289" evidence="1 2">
    <location>
        <begin position="75"/>
        <end position="76"/>
    </location>
</feature>
<feature type="peptide" id="PRO_0000438290" description="Peptide P4" evidence="5">
    <location>
        <begin position="77"/>
        <end position="123"/>
    </location>
</feature>
<feature type="splice variant" id="VSP_058639" description="In isoform b." evidence="6">
    <location>
        <begin position="1"/>
        <end position="67"/>
    </location>
</feature>
<name>NLP40_CAEEL</name>
<organism evidence="9">
    <name type="scientific">Caenorhabditis elegans</name>
    <dbReference type="NCBI Taxonomy" id="6239"/>
    <lineage>
        <taxon>Eukaryota</taxon>
        <taxon>Metazoa</taxon>
        <taxon>Ecdysozoa</taxon>
        <taxon>Nematoda</taxon>
        <taxon>Chromadorea</taxon>
        <taxon>Rhabditida</taxon>
        <taxon>Rhabditina</taxon>
        <taxon>Rhabditomorpha</taxon>
        <taxon>Rhabditoidea</taxon>
        <taxon>Rhabditidae</taxon>
        <taxon>Peloderinae</taxon>
        <taxon>Caenorhabditis</taxon>
    </lineage>
</organism>
<protein>
    <recommendedName>
        <fullName evidence="4">Neuropeptide-like peptides nlp-40</fullName>
    </recommendedName>
    <component>
        <recommendedName>
            <fullName evidence="5">Peptide P1</fullName>
        </recommendedName>
        <alternativeName>
            <fullName evidence="5">P1</fullName>
        </alternativeName>
    </component>
    <component>
        <recommendedName>
            <fullName evidence="5">Peptide P2</fullName>
        </recommendedName>
        <alternativeName>
            <fullName evidence="5">P2</fullName>
        </alternativeName>
    </component>
    <component>
        <recommendedName>
            <fullName evidence="5">Peptide P3</fullName>
        </recommendedName>
        <alternativeName>
            <fullName evidence="5">P3</fullName>
        </alternativeName>
    </component>
    <component>
        <recommendedName>
            <fullName evidence="5">Peptide P4</fullName>
        </recommendedName>
        <alternativeName>
            <fullName evidence="5">P4</fullName>
        </alternativeName>
    </component>
</protein>
<comment type="function">
    <molecule>Peptide P3</molecule>
    <text evidence="3">Neuropeptide ligand for the G-protein coupled receptor aex-2. Activates and regulates the rhythmic calcium influx in DVB GABergic neurons during the defecation motor program, which is a coordinated series of three muscle contractions that occurs every 45 seconds.</text>
</comment>
<comment type="subcellular location">
    <subcellularLocation>
        <location evidence="8">Secreted</location>
    </subcellularLocation>
    <subcellularLocation>
        <location evidence="3">Cytoplasmic vesicle</location>
    </subcellularLocation>
    <text evidence="3">Secreted by intestinal cells and subsequently endocytosed by coelomocytes. Co-localizes with snt-2 on the cell surface.</text>
</comment>
<comment type="alternative products">
    <event type="alternative splicing"/>
    <isoform>
        <id>Q9N4D8-1</id>
        <name evidence="10">a</name>
        <sequence type="displayed"/>
    </isoform>
    <isoform>
        <id>Q9N4D8-2</id>
        <name evidence="11">b</name>
        <sequence type="described" ref="VSP_058639"/>
    </isoform>
</comment>
<comment type="tissue specificity">
    <text evidence="3">Expressed in intestinal cells.</text>
</comment>
<comment type="disruption phenotype">
    <text evidence="3">Defecation defects including a distended intestinal lumen, a strong defect in intestinal content expulsion and reduced anterior body wall contraction.</text>
</comment>